<evidence type="ECO:0000250" key="1"/>
<evidence type="ECO:0000250" key="2">
    <source>
        <dbReference type="UniProtKB" id="P06396"/>
    </source>
</evidence>
<evidence type="ECO:0000255" key="3"/>
<evidence type="ECO:0000256" key="4">
    <source>
        <dbReference type="SAM" id="MobiDB-lite"/>
    </source>
</evidence>
<evidence type="ECO:0000269" key="5">
    <source>
    </source>
</evidence>
<evidence type="ECO:0000269" key="6">
    <source>
    </source>
</evidence>
<evidence type="ECO:0000269" key="7">
    <source>
    </source>
</evidence>
<evidence type="ECO:0000269" key="8">
    <source>
    </source>
</evidence>
<evidence type="ECO:0000269" key="9">
    <source>
    </source>
</evidence>
<evidence type="ECO:0000269" key="10">
    <source>
    </source>
</evidence>
<evidence type="ECO:0000269" key="11">
    <source ref="4"/>
</evidence>
<evidence type="ECO:0000303" key="12">
    <source>
    </source>
</evidence>
<evidence type="ECO:0000303" key="13">
    <source>
    </source>
</evidence>
<evidence type="ECO:0000305" key="14"/>
<evidence type="ECO:0007744" key="15">
    <source>
        <dbReference type="PDB" id="1NPH"/>
    </source>
</evidence>
<evidence type="ECO:0007744" key="16">
    <source>
        <dbReference type="PDB" id="4CBU"/>
    </source>
</evidence>
<evidence type="ECO:0007744" key="17">
    <source>
        <dbReference type="PDB" id="4CBW"/>
    </source>
</evidence>
<evidence type="ECO:0007744" key="18">
    <source>
        <dbReference type="PDB" id="4CBX"/>
    </source>
</evidence>
<evidence type="ECO:0007744" key="19">
    <source>
        <dbReference type="PDB" id="5MVV"/>
    </source>
</evidence>
<evidence type="ECO:0007744" key="20">
    <source>
        <dbReference type="PDB" id="6I4D"/>
    </source>
</evidence>
<evidence type="ECO:0007744" key="21">
    <source>
        <dbReference type="PDB" id="6I4E"/>
    </source>
</evidence>
<evidence type="ECO:0007744" key="22">
    <source>
        <dbReference type="PDB" id="6I4F"/>
    </source>
</evidence>
<evidence type="ECO:0007744" key="23">
    <source>
        <dbReference type="PDB" id="6I4G"/>
    </source>
</evidence>
<evidence type="ECO:0007744" key="24">
    <source>
        <dbReference type="PDB" id="6I4H"/>
    </source>
</evidence>
<evidence type="ECO:0007744" key="25">
    <source>
        <dbReference type="PDB" id="6I4I"/>
    </source>
</evidence>
<evidence type="ECO:0007744" key="26">
    <source>
        <dbReference type="PDB" id="6I4J"/>
    </source>
</evidence>
<evidence type="ECO:0007744" key="27">
    <source>
        <dbReference type="PDB" id="6I4K"/>
    </source>
</evidence>
<evidence type="ECO:0007744" key="28">
    <source>
        <dbReference type="PDB" id="6I4L"/>
    </source>
</evidence>
<evidence type="ECO:0007744" key="29">
    <source>
        <dbReference type="PDB" id="6I4M"/>
    </source>
</evidence>
<evidence type="ECO:0007744" key="30">
    <source>
    </source>
</evidence>
<evidence type="ECO:0007829" key="31">
    <source>
        <dbReference type="PDB" id="1NPH"/>
    </source>
</evidence>
<evidence type="ECO:0007829" key="32">
    <source>
        <dbReference type="PDB" id="6I4E"/>
    </source>
</evidence>
<name>GELS_MOUSE</name>
<accession>P13020</accession>
<accession>Q3UPB1</accession>
<accession>Q8R590</accession>
<dbReference type="EMBL" id="J04953">
    <property type="protein sequence ID" value="AAA37677.1"/>
    <property type="molecule type" value="mRNA"/>
</dbReference>
<dbReference type="EMBL" id="AK076156">
    <property type="protein sequence ID" value="BAC36223.1"/>
    <property type="molecule type" value="mRNA"/>
</dbReference>
<dbReference type="EMBL" id="AK089934">
    <property type="protein sequence ID" value="BAC41004.1"/>
    <property type="molecule type" value="mRNA"/>
</dbReference>
<dbReference type="EMBL" id="AK143664">
    <property type="protein sequence ID" value="BAE25485.1"/>
    <property type="molecule type" value="mRNA"/>
</dbReference>
<dbReference type="EMBL" id="BC023143">
    <property type="protein sequence ID" value="AAH23143.2"/>
    <property type="molecule type" value="mRNA"/>
</dbReference>
<dbReference type="CCDS" id="CCDS15960.1">
    <molecule id="P13020-1"/>
</dbReference>
<dbReference type="CCDS" id="CCDS79785.1">
    <molecule id="P13020-2"/>
</dbReference>
<dbReference type="RefSeq" id="NP_001193296.1">
    <molecule id="P13020-2"/>
    <property type="nucleotide sequence ID" value="NM_001206367.1"/>
</dbReference>
<dbReference type="RefSeq" id="NP_001193297.1">
    <molecule id="P13020-2"/>
    <property type="nucleotide sequence ID" value="NM_001206368.1"/>
</dbReference>
<dbReference type="RefSeq" id="NP_001193298.1">
    <molecule id="P13020-2"/>
    <property type="nucleotide sequence ID" value="NM_001206369.1"/>
</dbReference>
<dbReference type="RefSeq" id="NP_001349877.1">
    <molecule id="P13020-2"/>
    <property type="nucleotide sequence ID" value="NM_001362948.1"/>
</dbReference>
<dbReference type="RefSeq" id="NP_666232.2">
    <molecule id="P13020-1"/>
    <property type="nucleotide sequence ID" value="NM_146120.4"/>
</dbReference>
<dbReference type="PDB" id="1NPH">
    <property type="method" value="X-ray"/>
    <property type="resolution" value="3.00 A"/>
    <property type="chains" value="A=439-767"/>
</dbReference>
<dbReference type="PDB" id="4CBU">
    <property type="method" value="X-ray"/>
    <property type="resolution" value="1.30 A"/>
    <property type="chains" value="G=50-174"/>
</dbReference>
<dbReference type="PDB" id="4CBW">
    <property type="method" value="X-ray"/>
    <property type="resolution" value="2.50 A"/>
    <property type="chains" value="G=50-174"/>
</dbReference>
<dbReference type="PDB" id="4CBX">
    <property type="method" value="X-ray"/>
    <property type="resolution" value="2.20 A"/>
    <property type="chains" value="G=50-174"/>
</dbReference>
<dbReference type="PDB" id="5MVV">
    <property type="method" value="X-ray"/>
    <property type="resolution" value="1.40 A"/>
    <property type="chains" value="G=50-174"/>
</dbReference>
<dbReference type="PDB" id="6I4D">
    <property type="method" value="X-ray"/>
    <property type="resolution" value="1.24 A"/>
    <property type="chains" value="G=50-174"/>
</dbReference>
<dbReference type="PDB" id="6I4E">
    <property type="method" value="X-ray"/>
    <property type="resolution" value="1.22 A"/>
    <property type="chains" value="G=50-174"/>
</dbReference>
<dbReference type="PDB" id="6I4F">
    <property type="method" value="X-ray"/>
    <property type="resolution" value="1.50 A"/>
    <property type="chains" value="G=50-174"/>
</dbReference>
<dbReference type="PDB" id="6I4G">
    <property type="method" value="X-ray"/>
    <property type="resolution" value="2.00 A"/>
    <property type="chains" value="G/H=50-174"/>
</dbReference>
<dbReference type="PDB" id="6I4H">
    <property type="method" value="X-ray"/>
    <property type="resolution" value="1.40 A"/>
    <property type="chains" value="G=50-174"/>
</dbReference>
<dbReference type="PDB" id="6I4I">
    <property type="method" value="X-ray"/>
    <property type="resolution" value="1.90 A"/>
    <property type="chains" value="G=50-174"/>
</dbReference>
<dbReference type="PDB" id="6I4J">
    <property type="method" value="X-ray"/>
    <property type="resolution" value="1.50 A"/>
    <property type="chains" value="G=50-174"/>
</dbReference>
<dbReference type="PDB" id="6I4K">
    <property type="method" value="X-ray"/>
    <property type="resolution" value="1.83 A"/>
    <property type="chains" value="G=50-174"/>
</dbReference>
<dbReference type="PDB" id="6I4L">
    <property type="method" value="X-ray"/>
    <property type="resolution" value="1.83 A"/>
    <property type="chains" value="G=50-174"/>
</dbReference>
<dbReference type="PDB" id="6I4M">
    <property type="method" value="X-ray"/>
    <property type="resolution" value="1.87 A"/>
    <property type="chains" value="G=50-174"/>
</dbReference>
<dbReference type="PDBsum" id="1NPH"/>
<dbReference type="PDBsum" id="4CBU"/>
<dbReference type="PDBsum" id="4CBW"/>
<dbReference type="PDBsum" id="4CBX"/>
<dbReference type="PDBsum" id="5MVV"/>
<dbReference type="PDBsum" id="6I4D"/>
<dbReference type="PDBsum" id="6I4E"/>
<dbReference type="PDBsum" id="6I4F"/>
<dbReference type="PDBsum" id="6I4G"/>
<dbReference type="PDBsum" id="6I4H"/>
<dbReference type="PDBsum" id="6I4I"/>
<dbReference type="PDBsum" id="6I4J"/>
<dbReference type="PDBsum" id="6I4K"/>
<dbReference type="PDBsum" id="6I4L"/>
<dbReference type="PDBsum" id="6I4M"/>
<dbReference type="SMR" id="P13020"/>
<dbReference type="BioGRID" id="230683">
    <property type="interactions" value="28"/>
</dbReference>
<dbReference type="CORUM" id="P13020"/>
<dbReference type="DIP" id="DIP-31941N"/>
<dbReference type="FunCoup" id="P13020">
    <property type="interactions" value="516"/>
</dbReference>
<dbReference type="IntAct" id="P13020">
    <property type="interactions" value="14"/>
</dbReference>
<dbReference type="MINT" id="P13020"/>
<dbReference type="STRING" id="10090.ENSMUSP00000028239"/>
<dbReference type="GlyGen" id="P13020">
    <property type="glycosylation" value="2 sites, 1 O-linked glycan (2 sites)"/>
</dbReference>
<dbReference type="iPTMnet" id="P13020"/>
<dbReference type="PhosphoSitePlus" id="P13020"/>
<dbReference type="SwissPalm" id="P13020"/>
<dbReference type="REPRODUCTION-2DPAGE" id="P13020"/>
<dbReference type="CPTAC" id="non-CPTAC-3366"/>
<dbReference type="CPTAC" id="non-CPTAC-3514"/>
<dbReference type="jPOST" id="P13020"/>
<dbReference type="PaxDb" id="10090-ENSMUSP00000028239"/>
<dbReference type="PeptideAtlas" id="P13020"/>
<dbReference type="ProteomicsDB" id="272952">
    <molecule id="P13020-1"/>
</dbReference>
<dbReference type="ProteomicsDB" id="272953">
    <molecule id="P13020-2"/>
</dbReference>
<dbReference type="Pumba" id="P13020"/>
<dbReference type="Antibodypedia" id="3387">
    <property type="antibodies" value="783 antibodies from 47 providers"/>
</dbReference>
<dbReference type="DNASU" id="227753"/>
<dbReference type="Ensembl" id="ENSMUST00000028239.8">
    <molecule id="P13020-1"/>
    <property type="protein sequence ID" value="ENSMUSP00000028239.7"/>
    <property type="gene ID" value="ENSMUSG00000026879.15"/>
</dbReference>
<dbReference type="Ensembl" id="ENSMUST00000201185.4">
    <molecule id="P13020-2"/>
    <property type="protein sequence ID" value="ENSMUSP00000144561.2"/>
    <property type="gene ID" value="ENSMUSG00000026879.15"/>
</dbReference>
<dbReference type="GeneID" id="227753"/>
<dbReference type="KEGG" id="mmu:227753"/>
<dbReference type="UCSC" id="uc008jkc.2">
    <molecule id="P13020-1"/>
    <property type="organism name" value="mouse"/>
</dbReference>
<dbReference type="AGR" id="MGI:95851"/>
<dbReference type="CTD" id="2934"/>
<dbReference type="MGI" id="MGI:95851">
    <property type="gene designation" value="Gsn"/>
</dbReference>
<dbReference type="VEuPathDB" id="HostDB:ENSMUSG00000026879"/>
<dbReference type="eggNOG" id="KOG0443">
    <property type="taxonomic scope" value="Eukaryota"/>
</dbReference>
<dbReference type="GeneTree" id="ENSGT00940000155591"/>
<dbReference type="InParanoid" id="P13020"/>
<dbReference type="OMA" id="WKGRGAN"/>
<dbReference type="OrthoDB" id="6375767at2759"/>
<dbReference type="PhylomeDB" id="P13020"/>
<dbReference type="TreeFam" id="TF313468"/>
<dbReference type="Reactome" id="R-MMU-264870">
    <property type="pathway name" value="Caspase-mediated cleavage of cytoskeletal proteins"/>
</dbReference>
<dbReference type="Reactome" id="R-MMU-6798695">
    <property type="pathway name" value="Neutrophil degranulation"/>
</dbReference>
<dbReference type="BioGRID-ORCS" id="227753">
    <property type="hits" value="1 hit in 77 CRISPR screens"/>
</dbReference>
<dbReference type="CD-CODE" id="CE726F99">
    <property type="entry name" value="Postsynaptic density"/>
</dbReference>
<dbReference type="ChiTaRS" id="Gsn">
    <property type="organism name" value="mouse"/>
</dbReference>
<dbReference type="EvolutionaryTrace" id="P13020"/>
<dbReference type="PRO" id="PR:P13020"/>
<dbReference type="Proteomes" id="UP000000589">
    <property type="component" value="Chromosome 2"/>
</dbReference>
<dbReference type="RNAct" id="P13020">
    <property type="molecule type" value="protein"/>
</dbReference>
<dbReference type="Bgee" id="ENSMUSG00000026879">
    <property type="expression patterns" value="Expressed in skin of external ear and 296 other cell types or tissues"/>
</dbReference>
<dbReference type="ExpressionAtlas" id="P13020">
    <property type="expression patterns" value="baseline and differential"/>
</dbReference>
<dbReference type="GO" id="GO:0030478">
    <property type="term" value="C:actin cap"/>
    <property type="evidence" value="ECO:0007669"/>
    <property type="project" value="Ensembl"/>
</dbReference>
<dbReference type="GO" id="GO:0005829">
    <property type="term" value="C:cytosol"/>
    <property type="evidence" value="ECO:0000250"/>
    <property type="project" value="UniProtKB"/>
</dbReference>
<dbReference type="GO" id="GO:0005576">
    <property type="term" value="C:extracellular region"/>
    <property type="evidence" value="ECO:0000250"/>
    <property type="project" value="UniProtKB"/>
</dbReference>
<dbReference type="GO" id="GO:0005615">
    <property type="term" value="C:extracellular space"/>
    <property type="evidence" value="ECO:0007005"/>
    <property type="project" value="BHF-UCL"/>
</dbReference>
<dbReference type="GO" id="GO:0030027">
    <property type="term" value="C:lamellipodium"/>
    <property type="evidence" value="ECO:0000314"/>
    <property type="project" value="MGI"/>
</dbReference>
<dbReference type="GO" id="GO:0005634">
    <property type="term" value="C:nucleus"/>
    <property type="evidence" value="ECO:0007669"/>
    <property type="project" value="Ensembl"/>
</dbReference>
<dbReference type="GO" id="GO:0045335">
    <property type="term" value="C:phagocytic vesicle"/>
    <property type="evidence" value="ECO:0000314"/>
    <property type="project" value="MGI"/>
</dbReference>
<dbReference type="GO" id="GO:0005886">
    <property type="term" value="C:plasma membrane"/>
    <property type="evidence" value="ECO:0007669"/>
    <property type="project" value="Ensembl"/>
</dbReference>
<dbReference type="GO" id="GO:0002102">
    <property type="term" value="C:podosome"/>
    <property type="evidence" value="ECO:0007669"/>
    <property type="project" value="Ensembl"/>
</dbReference>
<dbReference type="GO" id="GO:0016528">
    <property type="term" value="C:sarcoplasm"/>
    <property type="evidence" value="ECO:0007669"/>
    <property type="project" value="Ensembl"/>
</dbReference>
<dbReference type="GO" id="GO:0051015">
    <property type="term" value="F:actin filament binding"/>
    <property type="evidence" value="ECO:0007669"/>
    <property type="project" value="InterPro"/>
</dbReference>
<dbReference type="GO" id="GO:0005509">
    <property type="term" value="F:calcium ion binding"/>
    <property type="evidence" value="ECO:0007669"/>
    <property type="project" value="Ensembl"/>
</dbReference>
<dbReference type="GO" id="GO:0045159">
    <property type="term" value="F:myosin II binding"/>
    <property type="evidence" value="ECO:0007669"/>
    <property type="project" value="Ensembl"/>
</dbReference>
<dbReference type="GO" id="GO:0036313">
    <property type="term" value="F:phosphatidylinositol 3-kinase catalytic subunit binding"/>
    <property type="evidence" value="ECO:0000353"/>
    <property type="project" value="BHF-UCL"/>
</dbReference>
<dbReference type="GO" id="GO:0030036">
    <property type="term" value="P:actin cytoskeleton organization"/>
    <property type="evidence" value="ECO:0000315"/>
    <property type="project" value="BHF-UCL"/>
</dbReference>
<dbReference type="GO" id="GO:0051693">
    <property type="term" value="P:actin filament capping"/>
    <property type="evidence" value="ECO:0000314"/>
    <property type="project" value="UniProtKB"/>
</dbReference>
<dbReference type="GO" id="GO:0030042">
    <property type="term" value="P:actin filament depolymerization"/>
    <property type="evidence" value="ECO:0000315"/>
    <property type="project" value="BHF-UCL"/>
</dbReference>
<dbReference type="GO" id="GO:0030041">
    <property type="term" value="P:actin filament polymerization"/>
    <property type="evidence" value="ECO:0000314"/>
    <property type="project" value="UniProtKB"/>
</dbReference>
<dbReference type="GO" id="GO:0051014">
    <property type="term" value="P:actin filament severing"/>
    <property type="evidence" value="ECO:0000315"/>
    <property type="project" value="UniProtKB"/>
</dbReference>
<dbReference type="GO" id="GO:1990000">
    <property type="term" value="P:amyloid fibril formation"/>
    <property type="evidence" value="ECO:0007669"/>
    <property type="project" value="Ensembl"/>
</dbReference>
<dbReference type="GO" id="GO:0086003">
    <property type="term" value="P:cardiac muscle cell contraction"/>
    <property type="evidence" value="ECO:0000315"/>
    <property type="project" value="BHF-UCL"/>
</dbReference>
<dbReference type="GO" id="GO:0071346">
    <property type="term" value="P:cellular response to type II interferon"/>
    <property type="evidence" value="ECO:0000314"/>
    <property type="project" value="MGI"/>
</dbReference>
<dbReference type="GO" id="GO:0060271">
    <property type="term" value="P:cilium assembly"/>
    <property type="evidence" value="ECO:0000250"/>
    <property type="project" value="UniProtKB"/>
</dbReference>
<dbReference type="GO" id="GO:0097284">
    <property type="term" value="P:hepatocyte apoptotic process"/>
    <property type="evidence" value="ECO:0007669"/>
    <property type="project" value="Ensembl"/>
</dbReference>
<dbReference type="GO" id="GO:0046597">
    <property type="term" value="P:host-mediated suppression of symbiont invasion"/>
    <property type="evidence" value="ECO:0007669"/>
    <property type="project" value="Ensembl"/>
</dbReference>
<dbReference type="GO" id="GO:0006911">
    <property type="term" value="P:phagocytosis, engulfment"/>
    <property type="evidence" value="ECO:0000315"/>
    <property type="project" value="UniProtKB"/>
</dbReference>
<dbReference type="GO" id="GO:0051127">
    <property type="term" value="P:positive regulation of actin nucleation"/>
    <property type="evidence" value="ECO:0007669"/>
    <property type="project" value="Ensembl"/>
</dbReference>
<dbReference type="GO" id="GO:1902174">
    <property type="term" value="P:positive regulation of keratinocyte apoptotic process"/>
    <property type="evidence" value="ECO:0007669"/>
    <property type="project" value="Ensembl"/>
</dbReference>
<dbReference type="GO" id="GO:1903923">
    <property type="term" value="P:positive regulation of protein processing in phagocytic vesicle"/>
    <property type="evidence" value="ECO:0000315"/>
    <property type="project" value="UniProtKB"/>
</dbReference>
<dbReference type="GO" id="GO:0031648">
    <property type="term" value="P:protein destabilization"/>
    <property type="evidence" value="ECO:0007669"/>
    <property type="project" value="Ensembl"/>
</dbReference>
<dbReference type="GO" id="GO:1903903">
    <property type="term" value="P:regulation of establishment of T cell polarity"/>
    <property type="evidence" value="ECO:0007669"/>
    <property type="project" value="Ensembl"/>
</dbReference>
<dbReference type="GO" id="GO:1903906">
    <property type="term" value="P:regulation of plasma membrane raft polarization"/>
    <property type="evidence" value="ECO:0007669"/>
    <property type="project" value="Ensembl"/>
</dbReference>
<dbReference type="GO" id="GO:0071801">
    <property type="term" value="P:regulation of podosome assembly"/>
    <property type="evidence" value="ECO:0007669"/>
    <property type="project" value="Ensembl"/>
</dbReference>
<dbReference type="GO" id="GO:1903909">
    <property type="term" value="P:regulation of receptor clustering"/>
    <property type="evidence" value="ECO:0007669"/>
    <property type="project" value="Ensembl"/>
</dbReference>
<dbReference type="GO" id="GO:0055119">
    <property type="term" value="P:relaxation of cardiac muscle"/>
    <property type="evidence" value="ECO:0000315"/>
    <property type="project" value="BHF-UCL"/>
</dbReference>
<dbReference type="GO" id="GO:0097017">
    <property type="term" value="P:renal protein absorption"/>
    <property type="evidence" value="ECO:0007669"/>
    <property type="project" value="Ensembl"/>
</dbReference>
<dbReference type="GO" id="GO:0035994">
    <property type="term" value="P:response to muscle stretch"/>
    <property type="evidence" value="ECO:0000315"/>
    <property type="project" value="BHF-UCL"/>
</dbReference>
<dbReference type="GO" id="GO:0014891">
    <property type="term" value="P:striated muscle atrophy"/>
    <property type="evidence" value="ECO:0007669"/>
    <property type="project" value="Ensembl"/>
</dbReference>
<dbReference type="GO" id="GO:0016192">
    <property type="term" value="P:vesicle-mediated transport"/>
    <property type="evidence" value="ECO:0000315"/>
    <property type="project" value="MGI"/>
</dbReference>
<dbReference type="CDD" id="cd11290">
    <property type="entry name" value="gelsolin_S1_like"/>
    <property type="match status" value="1"/>
</dbReference>
<dbReference type="CDD" id="cd11289">
    <property type="entry name" value="gelsolin_S2_like"/>
    <property type="match status" value="1"/>
</dbReference>
<dbReference type="CDD" id="cd11292">
    <property type="entry name" value="gelsolin_S3_like"/>
    <property type="match status" value="1"/>
</dbReference>
<dbReference type="CDD" id="cd11293">
    <property type="entry name" value="gelsolin_S4_like"/>
    <property type="match status" value="1"/>
</dbReference>
<dbReference type="CDD" id="cd11288">
    <property type="entry name" value="gelsolin_S5_like"/>
    <property type="match status" value="1"/>
</dbReference>
<dbReference type="CDD" id="cd11291">
    <property type="entry name" value="gelsolin_S6_like"/>
    <property type="match status" value="1"/>
</dbReference>
<dbReference type="FunFam" id="3.40.20.10:FF:000001">
    <property type="entry name" value="Gelsolin"/>
    <property type="match status" value="1"/>
</dbReference>
<dbReference type="FunFam" id="3.40.20.10:FF:000002">
    <property type="entry name" value="Gelsolin"/>
    <property type="match status" value="1"/>
</dbReference>
<dbReference type="FunFam" id="3.40.20.10:FF:000004">
    <property type="entry name" value="Gelsolin"/>
    <property type="match status" value="1"/>
</dbReference>
<dbReference type="FunFam" id="3.40.20.10:FF:000005">
    <property type="entry name" value="Gelsolin"/>
    <property type="match status" value="1"/>
</dbReference>
<dbReference type="FunFam" id="3.40.20.10:FF:000009">
    <property type="entry name" value="gelsolin isoform X1"/>
    <property type="match status" value="1"/>
</dbReference>
<dbReference type="FunFam" id="3.40.20.10:FF:000008">
    <property type="entry name" value="gelsolin isoform X2"/>
    <property type="match status" value="1"/>
</dbReference>
<dbReference type="Gene3D" id="3.40.20.10">
    <property type="entry name" value="Severin"/>
    <property type="match status" value="6"/>
</dbReference>
<dbReference type="InterPro" id="IPR029006">
    <property type="entry name" value="ADF-H/Gelsolin-like_dom_sf"/>
</dbReference>
<dbReference type="InterPro" id="IPR007123">
    <property type="entry name" value="Gelsolin-like_dom"/>
</dbReference>
<dbReference type="InterPro" id="IPR007122">
    <property type="entry name" value="Villin/Gelsolin"/>
</dbReference>
<dbReference type="PANTHER" id="PTHR11977:SF29">
    <property type="entry name" value="GELSOLIN"/>
    <property type="match status" value="1"/>
</dbReference>
<dbReference type="PANTHER" id="PTHR11977">
    <property type="entry name" value="VILLIN"/>
    <property type="match status" value="1"/>
</dbReference>
<dbReference type="Pfam" id="PF00626">
    <property type="entry name" value="Gelsolin"/>
    <property type="match status" value="6"/>
</dbReference>
<dbReference type="PRINTS" id="PR00597">
    <property type="entry name" value="GELSOLIN"/>
</dbReference>
<dbReference type="SMART" id="SM00262">
    <property type="entry name" value="GEL"/>
    <property type="match status" value="6"/>
</dbReference>
<dbReference type="SUPFAM" id="SSF55753">
    <property type="entry name" value="Actin depolymerizing proteins"/>
    <property type="match status" value="6"/>
</dbReference>
<sequence>MAPYRSSLLCALLLLALCALSPSHAATTSRGRAQERAPQSRVSEARPSTMVVEHPEFLKAGKEPGLQIWRVEKFDLVPVPPNLYGDFFTGDAYVILKTVQLRNGNLQYDLHYWLGNECSQDESGAAAIFTVQLDDYLNGRAVQHREVQGFESSTFSGYFKSGLKYKKGGVASGFKHVVPNEVVVQRLFQVKGRRVVRATEVPVSWDSFNNGDCFILDLGNNIYQWCGSGSNKFERLKATQVSKGIRDNERSGRAQVHVSEEGGEPEAMLQVLGPKPALPEGTEDTAKEDAANRRLAKLYKVSNGAGSMSVSLVADENPFAQGALRSEDCFILDHGRDGKIFVWKGKQANMEERKAALKTASDFISKMQYPRQTQVSVLPEGGETPLFKQFFKNWRDPDQTDGPGLGYLSSHIANVERVPFDAATLHTSTAMAAQHGMDDDGTGQKQIWRIEGSNKVPVDPATYGQFYGGDSYIILYNYRHGGRQGQIIYNWQGAQSTQDEVAASAILTAQLDEELGGTPVQSRVVQGKEPAHLMSLFGGKPMIIYKGGTSRDGGQTAPASIRLFQVRASSSGATRAVEVMPKSGALNSNDAFVLKTPSAAYLWVGAGASEAEKTGAQELLKVLRSQHVQVEEGSEPDAFWEALGGKTAYRTSPRLKDKKMDAHPPRLFACSNRIGRFVIEEVPGELMQEDLATDDVMLLDTWDQVFVWVGKDSQEEEKTEALTSAKRYIETDPANRDRRTPITVVRQGFEPPSFVGWFLGWDDNYWSVDPLDRALAELAA</sequence>
<organism>
    <name type="scientific">Mus musculus</name>
    <name type="common">Mouse</name>
    <dbReference type="NCBI Taxonomy" id="10090"/>
    <lineage>
        <taxon>Eukaryota</taxon>
        <taxon>Metazoa</taxon>
        <taxon>Chordata</taxon>
        <taxon>Craniata</taxon>
        <taxon>Vertebrata</taxon>
        <taxon>Euteleostomi</taxon>
        <taxon>Mammalia</taxon>
        <taxon>Eutheria</taxon>
        <taxon>Euarchontoglires</taxon>
        <taxon>Glires</taxon>
        <taxon>Rodentia</taxon>
        <taxon>Myomorpha</taxon>
        <taxon>Muroidea</taxon>
        <taxon>Muridae</taxon>
        <taxon>Murinae</taxon>
        <taxon>Mus</taxon>
        <taxon>Mus</taxon>
    </lineage>
</organism>
<keyword id="KW-0002">3D-structure</keyword>
<keyword id="KW-0007">Acetylation</keyword>
<keyword id="KW-0117">Actin capping</keyword>
<keyword id="KW-0009">Actin-binding</keyword>
<keyword id="KW-0024">Alternative initiation</keyword>
<keyword id="KW-0106">Calcium</keyword>
<keyword id="KW-0970">Cilium biogenesis/degradation</keyword>
<keyword id="KW-0963">Cytoplasm</keyword>
<keyword id="KW-0206">Cytoskeleton</keyword>
<keyword id="KW-0903">Direct protein sequencing</keyword>
<keyword id="KW-1015">Disulfide bond</keyword>
<keyword id="KW-0479">Metal-binding</keyword>
<keyword id="KW-0597">Phosphoprotein</keyword>
<keyword id="KW-1185">Reference proteome</keyword>
<keyword id="KW-0677">Repeat</keyword>
<keyword id="KW-0964">Secreted</keyword>
<keyword id="KW-0732">Signal</keyword>
<reference key="1">
    <citation type="journal article" date="1989" name="J. Biol. Chem.">
        <title>Cloning of murine gelsolin and its regulation during differentiation of embryonal carcinoma cells.</title>
        <authorList>
            <person name="Dieffenbach C.W."/>
            <person name="Sengupta D.N."/>
            <person name="Krause D."/>
            <person name="Sawzak D."/>
            <person name="Silverman R.H."/>
        </authorList>
    </citation>
    <scope>NUCLEOTIDE SEQUENCE [MRNA] (ISOFORM 2)</scope>
</reference>
<reference key="2">
    <citation type="journal article" date="2005" name="Science">
        <title>The transcriptional landscape of the mammalian genome.</title>
        <authorList>
            <person name="Carninci P."/>
            <person name="Kasukawa T."/>
            <person name="Katayama S."/>
            <person name="Gough J."/>
            <person name="Frith M.C."/>
            <person name="Maeda N."/>
            <person name="Oyama R."/>
            <person name="Ravasi T."/>
            <person name="Lenhard B."/>
            <person name="Wells C."/>
            <person name="Kodzius R."/>
            <person name="Shimokawa K."/>
            <person name="Bajic V.B."/>
            <person name="Brenner S.E."/>
            <person name="Batalov S."/>
            <person name="Forrest A.R."/>
            <person name="Zavolan M."/>
            <person name="Davis M.J."/>
            <person name="Wilming L.G."/>
            <person name="Aidinis V."/>
            <person name="Allen J.E."/>
            <person name="Ambesi-Impiombato A."/>
            <person name="Apweiler R."/>
            <person name="Aturaliya R.N."/>
            <person name="Bailey T.L."/>
            <person name="Bansal M."/>
            <person name="Baxter L."/>
            <person name="Beisel K.W."/>
            <person name="Bersano T."/>
            <person name="Bono H."/>
            <person name="Chalk A.M."/>
            <person name="Chiu K.P."/>
            <person name="Choudhary V."/>
            <person name="Christoffels A."/>
            <person name="Clutterbuck D.R."/>
            <person name="Crowe M.L."/>
            <person name="Dalla E."/>
            <person name="Dalrymple B.P."/>
            <person name="de Bono B."/>
            <person name="Della Gatta G."/>
            <person name="di Bernardo D."/>
            <person name="Down T."/>
            <person name="Engstrom P."/>
            <person name="Fagiolini M."/>
            <person name="Faulkner G."/>
            <person name="Fletcher C.F."/>
            <person name="Fukushima T."/>
            <person name="Furuno M."/>
            <person name="Futaki S."/>
            <person name="Gariboldi M."/>
            <person name="Georgii-Hemming P."/>
            <person name="Gingeras T.R."/>
            <person name="Gojobori T."/>
            <person name="Green R.E."/>
            <person name="Gustincich S."/>
            <person name="Harbers M."/>
            <person name="Hayashi Y."/>
            <person name="Hensch T.K."/>
            <person name="Hirokawa N."/>
            <person name="Hill D."/>
            <person name="Huminiecki L."/>
            <person name="Iacono M."/>
            <person name="Ikeo K."/>
            <person name="Iwama A."/>
            <person name="Ishikawa T."/>
            <person name="Jakt M."/>
            <person name="Kanapin A."/>
            <person name="Katoh M."/>
            <person name="Kawasawa Y."/>
            <person name="Kelso J."/>
            <person name="Kitamura H."/>
            <person name="Kitano H."/>
            <person name="Kollias G."/>
            <person name="Krishnan S.P."/>
            <person name="Kruger A."/>
            <person name="Kummerfeld S.K."/>
            <person name="Kurochkin I.V."/>
            <person name="Lareau L.F."/>
            <person name="Lazarevic D."/>
            <person name="Lipovich L."/>
            <person name="Liu J."/>
            <person name="Liuni S."/>
            <person name="McWilliam S."/>
            <person name="Madan Babu M."/>
            <person name="Madera M."/>
            <person name="Marchionni L."/>
            <person name="Matsuda H."/>
            <person name="Matsuzawa S."/>
            <person name="Miki H."/>
            <person name="Mignone F."/>
            <person name="Miyake S."/>
            <person name="Morris K."/>
            <person name="Mottagui-Tabar S."/>
            <person name="Mulder N."/>
            <person name="Nakano N."/>
            <person name="Nakauchi H."/>
            <person name="Ng P."/>
            <person name="Nilsson R."/>
            <person name="Nishiguchi S."/>
            <person name="Nishikawa S."/>
            <person name="Nori F."/>
            <person name="Ohara O."/>
            <person name="Okazaki Y."/>
            <person name="Orlando V."/>
            <person name="Pang K.C."/>
            <person name="Pavan W.J."/>
            <person name="Pavesi G."/>
            <person name="Pesole G."/>
            <person name="Petrovsky N."/>
            <person name="Piazza S."/>
            <person name="Reed J."/>
            <person name="Reid J.F."/>
            <person name="Ring B.Z."/>
            <person name="Ringwald M."/>
            <person name="Rost B."/>
            <person name="Ruan Y."/>
            <person name="Salzberg S.L."/>
            <person name="Sandelin A."/>
            <person name="Schneider C."/>
            <person name="Schoenbach C."/>
            <person name="Sekiguchi K."/>
            <person name="Semple C.A."/>
            <person name="Seno S."/>
            <person name="Sessa L."/>
            <person name="Sheng Y."/>
            <person name="Shibata Y."/>
            <person name="Shimada H."/>
            <person name="Shimada K."/>
            <person name="Silva D."/>
            <person name="Sinclair B."/>
            <person name="Sperling S."/>
            <person name="Stupka E."/>
            <person name="Sugiura K."/>
            <person name="Sultana R."/>
            <person name="Takenaka Y."/>
            <person name="Taki K."/>
            <person name="Tammoja K."/>
            <person name="Tan S.L."/>
            <person name="Tang S."/>
            <person name="Taylor M.S."/>
            <person name="Tegner J."/>
            <person name="Teichmann S.A."/>
            <person name="Ueda H.R."/>
            <person name="van Nimwegen E."/>
            <person name="Verardo R."/>
            <person name="Wei C.L."/>
            <person name="Yagi K."/>
            <person name="Yamanishi H."/>
            <person name="Zabarovsky E."/>
            <person name="Zhu S."/>
            <person name="Zimmer A."/>
            <person name="Hide W."/>
            <person name="Bult C."/>
            <person name="Grimmond S.M."/>
            <person name="Teasdale R.D."/>
            <person name="Liu E.T."/>
            <person name="Brusic V."/>
            <person name="Quackenbush J."/>
            <person name="Wahlestedt C."/>
            <person name="Mattick J.S."/>
            <person name="Hume D.A."/>
            <person name="Kai C."/>
            <person name="Sasaki D."/>
            <person name="Tomaru Y."/>
            <person name="Fukuda S."/>
            <person name="Kanamori-Katayama M."/>
            <person name="Suzuki M."/>
            <person name="Aoki J."/>
            <person name="Arakawa T."/>
            <person name="Iida J."/>
            <person name="Imamura K."/>
            <person name="Itoh M."/>
            <person name="Kato T."/>
            <person name="Kawaji H."/>
            <person name="Kawagashira N."/>
            <person name="Kawashima T."/>
            <person name="Kojima M."/>
            <person name="Kondo S."/>
            <person name="Konno H."/>
            <person name="Nakano K."/>
            <person name="Ninomiya N."/>
            <person name="Nishio T."/>
            <person name="Okada M."/>
            <person name="Plessy C."/>
            <person name="Shibata K."/>
            <person name="Shiraki T."/>
            <person name="Suzuki S."/>
            <person name="Tagami M."/>
            <person name="Waki K."/>
            <person name="Watahiki A."/>
            <person name="Okamura-Oho Y."/>
            <person name="Suzuki H."/>
            <person name="Kawai J."/>
            <person name="Hayashizaki Y."/>
        </authorList>
    </citation>
    <scope>NUCLEOTIDE SEQUENCE [LARGE SCALE MRNA] (ISOFORMS 1 AND 2)</scope>
    <source>
        <strain>C57BL/6J</strain>
        <tissue>Head</tissue>
        <tissue>Spleen</tissue>
    </source>
</reference>
<reference key="3">
    <citation type="journal article" date="2004" name="Genome Res.">
        <title>The status, quality, and expansion of the NIH full-length cDNA project: the Mammalian Gene Collection (MGC).</title>
        <authorList>
            <consortium name="The MGC Project Team"/>
        </authorList>
    </citation>
    <scope>NUCLEOTIDE SEQUENCE [LARGE SCALE MRNA] (ISOFORM 1)</scope>
    <source>
        <tissue>Mammary gland</tissue>
    </source>
</reference>
<reference key="4">
    <citation type="submission" date="2008-03" db="UniProtKB">
        <authorList>
            <person name="Sumpton D.P."/>
            <person name="Sandilands E."/>
            <person name="Frame M.C."/>
            <person name="Bienvenut W.V."/>
        </authorList>
    </citation>
    <scope>PROTEIN SEQUENCE OF 50-70 (ISOFORM 2)</scope>
    <scope>PROTEIN SEQUENCE OF 74-97; 146-160; 167-186; 254-293; 301-336; 359-366; 372-388; 396-445; 456-479; 529-546; 552-562; 583-621; 625-646; 667-673; 712-736 AND 739-746 (ISOFORMS 1/2)</scope>
    <scope>CLEAVAGE OF INITIATOR METHIONINE (ISOFORM 2)</scope>
    <scope>ACETYLATION AT MET-1 (ISOFORM 2)</scope>
    <scope>IDENTIFICATION BY MASS SPECTROMETRY</scope>
    <source>
        <tissue>Embryonic fibroblast</tissue>
    </source>
</reference>
<reference key="5">
    <citation type="journal article" date="1994" name="Electrophoresis">
        <title>Separation and sequencing of familiar and novel murine proteins using preparative two-dimensional gel electrophoresis.</title>
        <authorList>
            <person name="Merrick B.A."/>
            <person name="Patterson R.M."/>
            <person name="Wichter L.L."/>
            <person name="He C."/>
            <person name="Selkirk J.K."/>
        </authorList>
    </citation>
    <scope>PROTEIN SEQUENCE OF 51-73</scope>
    <source>
        <tissue>Fibroblast</tissue>
    </source>
</reference>
<reference key="6">
    <citation type="journal article" date="2010" name="Cell">
        <title>A tissue-specific atlas of mouse protein phosphorylation and expression.</title>
        <authorList>
            <person name="Huttlin E.L."/>
            <person name="Jedrychowski M.P."/>
            <person name="Elias J.E."/>
            <person name="Goswami T."/>
            <person name="Rad R."/>
            <person name="Beausoleil S.A."/>
            <person name="Villen J."/>
            <person name="Haas W."/>
            <person name="Sowa M.E."/>
            <person name="Gygi S.P."/>
        </authorList>
    </citation>
    <scope>IDENTIFICATION BY MASS SPECTROMETRY [LARGE SCALE ANALYSIS]</scope>
    <source>
        <tissue>Brain</tissue>
        <tissue>Brown adipose tissue</tissue>
        <tissue>Heart</tissue>
        <tissue>Kidney</tissue>
        <tissue>Liver</tissue>
        <tissue>Lung</tissue>
        <tissue>Pancreas</tissue>
        <tissue>Spleen</tissue>
        <tissue>Testis</tissue>
    </source>
</reference>
<reference key="7">
    <citation type="journal article" date="2012" name="Immunity">
        <title>Regulation of actin dynamics by protein kinase R control of gelsolin enforces basal innate immune defense.</title>
        <authorList>
            <person name="Irving A.T."/>
            <person name="Wang D."/>
            <person name="Vasilevski O."/>
            <person name="Latchoumanin O."/>
            <person name="Kozer N."/>
            <person name="Clayton A.H."/>
            <person name="Szczepny A."/>
            <person name="Morimoto H."/>
            <person name="Xu D."/>
            <person name="Williams B.R."/>
            <person name="Sadler A.J."/>
        </authorList>
    </citation>
    <scope>INTERACTION WITH EIF2AK2</scope>
</reference>
<reference key="8">
    <citation type="journal article" date="2013" name="Mol. Cell">
        <title>SIRT5-mediated lysine desuccinylation impacts diverse metabolic pathways.</title>
        <authorList>
            <person name="Park J."/>
            <person name="Chen Y."/>
            <person name="Tishkoff D.X."/>
            <person name="Peng C."/>
            <person name="Tan M."/>
            <person name="Dai L."/>
            <person name="Xie Z."/>
            <person name="Zhang Y."/>
            <person name="Zwaans B.M."/>
            <person name="Skinner M.E."/>
            <person name="Lombard D.B."/>
            <person name="Zhao Y."/>
        </authorList>
    </citation>
    <scope>ACETYLATION [LARGE SCALE ANALYSIS] AT LYS-582</scope>
    <scope>IDENTIFICATION BY MASS SPECTROMETRY [LARGE SCALE ANALYSIS]</scope>
    <source>
        <tissue>Embryonic fibroblast</tissue>
    </source>
</reference>
<reference key="9">
    <citation type="journal article" date="2023" name="Proc. Natl. Acad. Sci. U.S.A.">
        <title>A human FLII gene variant alters sarcomeric actin thin filament length and predisposes to cardiomyopathy.</title>
        <authorList>
            <person name="Kuwabara Y."/>
            <person name="York A.J."/>
            <person name="Lin S.C."/>
            <person name="Sargent M.A."/>
            <person name="Grimes K.M."/>
            <person name="Pirruccello J.P."/>
            <person name="Molkentin J.D."/>
        </authorList>
    </citation>
    <scope>INTERACTION WITH FLII</scope>
</reference>
<reference evidence="15" key="10">
    <citation type="journal article" date="2003" name="J. Mol. Biol.">
        <title>Gelsolin domains 4-6 in active, actin-free conformation identifies sites of regulatory calcium ions.</title>
        <authorList>
            <person name="Kolappan S."/>
            <person name="Gooch J.T."/>
            <person name="Weeds A.G."/>
            <person name="McLaughlin P.J."/>
        </authorList>
    </citation>
    <scope>X-RAY CRYSTALLOGRAPHY (3.00 ANGSTROMS) OF 439-767 IN COMPLEX WITH CALCIUM</scope>
    <scope>DOMAIN</scope>
</reference>
<reference evidence="16 17 18" key="11">
    <citation type="journal article" date="2014" name="PLoS Pathog.">
        <title>Structural differences explain diverse functions of Plasmodium actins.</title>
        <authorList>
            <person name="Vahokoski J."/>
            <person name="Bhargav S.P."/>
            <person name="Desfosses A."/>
            <person name="Andreadaki M."/>
            <person name="Kumpula E.P."/>
            <person name="Martinez S.M."/>
            <person name="Ignatev A."/>
            <person name="Lepper S."/>
            <person name="Frischknecht F."/>
            <person name="Siden-Kiamos I."/>
            <person name="Sachse C."/>
            <person name="Kursula I."/>
        </authorList>
    </citation>
    <scope>X-RAY CRYSTALLOGRAPHY (1.30 ANGSTROMS) OF 50-174 IN COMPLEX WITH P.FALCIPARUM ACT1; P.BERGHEI ACT2 AND CALCIUM</scope>
    <scope>DOMAIN</scope>
</reference>
<reference evidence="19" key="12">
    <citation type="journal article" date="2017" name="Acta Crystallogr. D">
        <title>Rapid cadmium SAD phasing at the standard wavelength (1 A).</title>
        <authorList>
            <person name="Panneerselvam S."/>
            <person name="Kumpula E.P."/>
            <person name="Kursula I."/>
            <person name="Burkhardt A."/>
            <person name="Meents A."/>
        </authorList>
    </citation>
    <scope>X-RAY CRYSTALLOGRAPHY (1.40 ANGSTROMS) OF 50-174 IN COMPLEX WITH P.FALCIPARUM ACT1 AND CALCIUM</scope>
    <scope>DOMAIN</scope>
</reference>
<reference evidence="20 21 22 23 24 25 26 27 28 29" key="13">
    <citation type="journal article" date="2019" name="PLoS Biol.">
        <title>Atomic view into Plasmodium actin polymerization, ATP hydrolysis, and fragmentation.</title>
        <authorList>
            <person name="Kumpula E.P."/>
            <person name="Lopez A.J."/>
            <person name="Tajedin L."/>
            <person name="Han H."/>
            <person name="Kursula I."/>
        </authorList>
    </citation>
    <scope>X-RAY CRYSTALLOGRAPHY (1.22 ANGSTROMS) OF 50-174 IN COMPLEX P.FALCIPARUM ACT1; P.BERGHEI ACT2 AND CALCIUM</scope>
    <scope>DOMAIN</scope>
</reference>
<feature type="signal peptide" evidence="3">
    <location>
        <begin position="1"/>
        <end position="25"/>
    </location>
</feature>
<feature type="chain" id="PRO_0000036387" description="Gelsolin">
    <location>
        <begin position="26"/>
        <end position="780"/>
    </location>
</feature>
<feature type="repeat" description="Gelsolin-like 1" evidence="3">
    <location>
        <begin position="74"/>
        <end position="155"/>
    </location>
</feature>
<feature type="repeat" description="Gelsolin-like 2" evidence="3">
    <location>
        <begin position="196"/>
        <end position="268"/>
    </location>
</feature>
<feature type="repeat" description="Gelsolin-like 3" evidence="3">
    <location>
        <begin position="315"/>
        <end position="387"/>
    </location>
</feature>
<feature type="repeat" description="Gelsolin-like 4" evidence="3">
    <location>
        <begin position="453"/>
        <end position="534"/>
    </location>
</feature>
<feature type="repeat" description="Gelsolin-like 5" evidence="3">
    <location>
        <begin position="575"/>
        <end position="640"/>
    </location>
</feature>
<feature type="repeat" description="Gelsolin-like 6" evidence="3">
    <location>
        <begin position="679"/>
        <end position="754"/>
    </location>
</feature>
<feature type="region of interest" description="Actin-severing" evidence="3">
    <location>
        <begin position="51"/>
        <end position="174"/>
    </location>
</feature>
<feature type="region of interest" description="Actin-actin interfilament contact point">
    <location>
        <begin position="121"/>
        <end position="124"/>
    </location>
</feature>
<feature type="region of interest" description="Disordered" evidence="4">
    <location>
        <begin position="244"/>
        <end position="269"/>
    </location>
</feature>
<feature type="region of interest" description="Actin-binding, Ca-sensitive" evidence="3">
    <location>
        <begin position="432"/>
        <end position="780"/>
    </location>
</feature>
<feature type="binding site" evidence="7 8 9 16 17 18 19 20 21 22 23 24 25 26 27 28 29">
    <location>
        <position position="90"/>
    </location>
    <ligand>
        <name>Ca(2+)</name>
        <dbReference type="ChEBI" id="CHEBI:29108"/>
        <label>1</label>
        <note>type II</note>
    </ligand>
</feature>
<feature type="binding site" evidence="7 8 9 16 17 18 19 20 21 22 23 24 25 26 27 28 29">
    <location>
        <position position="91"/>
    </location>
    <ligand>
        <name>Ca(2+)</name>
        <dbReference type="ChEBI" id="CHEBI:29108"/>
        <label>1</label>
        <note>type II</note>
    </ligand>
</feature>
<feature type="binding site" evidence="7 8 9 16 17 18 19 20 21 22 23 24 25 26 27 28 29">
    <location>
        <position position="122"/>
    </location>
    <ligand>
        <name>Ca(2+)</name>
        <dbReference type="ChEBI" id="CHEBI:29108"/>
        <label>1</label>
        <note>type II</note>
    </ligand>
</feature>
<feature type="binding site" evidence="7 9 16 17 18 20 21 22 24 25 26 27 28 29">
    <location>
        <position position="134"/>
    </location>
    <ligand>
        <name>Ca(2+)</name>
        <dbReference type="ChEBI" id="CHEBI:29108"/>
        <label>2</label>
        <note>type I</note>
    </ligand>
</feature>
<feature type="binding site" evidence="7 9 16 17 18 20 21 22 24 25 26 27 28 29">
    <location>
        <position position="139"/>
    </location>
    <ligand>
        <name>Ca(2+)</name>
        <dbReference type="ChEBI" id="CHEBI:29108"/>
        <label>2</label>
        <note>type I</note>
    </ligand>
</feature>
<feature type="binding site" evidence="7 9 16 17 18 20 21 22 24 25 26 27 28 29">
    <location>
        <position position="141"/>
    </location>
    <ligand>
        <name>Ca(2+)</name>
        <dbReference type="ChEBI" id="CHEBI:29108"/>
        <label>2</label>
        <note>type I</note>
    </ligand>
</feature>
<feature type="binding site" evidence="1">
    <location>
        <begin position="160"/>
        <end position="167"/>
    </location>
    <ligand>
        <name>a 1,2-diacyl-sn-glycero-3-phospho-(1D-myo-inositol-4,5-bisphosphate)</name>
        <dbReference type="ChEBI" id="CHEBI:58456"/>
    </ligand>
</feature>
<feature type="binding site" evidence="7 8 9 16 17 18 19 20 21 22 23 24 25 26 27 28 29">
    <location>
        <position position="170"/>
    </location>
    <ligand>
        <name>Ca(2+)</name>
        <dbReference type="ChEBI" id="CHEBI:29108"/>
        <label>1</label>
        <note>type II</note>
    </ligand>
</feature>
<feature type="binding site" evidence="1">
    <location>
        <begin position="186"/>
        <end position="194"/>
    </location>
    <ligand>
        <name>a 1,2-diacyl-sn-glycero-3-phospho-(1D-myo-inositol-4,5-bisphosphate)</name>
        <dbReference type="ChEBI" id="CHEBI:58456"/>
    </ligand>
</feature>
<feature type="binding site" evidence="2">
    <location>
        <position position="211"/>
    </location>
    <ligand>
        <name>Ca(2+)</name>
        <dbReference type="ChEBI" id="CHEBI:29108"/>
        <label>3</label>
        <note>type II</note>
    </ligand>
</feature>
<feature type="binding site" evidence="2">
    <location>
        <position position="212"/>
    </location>
    <ligand>
        <name>Ca(2+)</name>
        <dbReference type="ChEBI" id="CHEBI:29108"/>
        <label>3</label>
        <note>type II</note>
    </ligand>
</feature>
<feature type="binding site" evidence="2">
    <location>
        <position position="234"/>
    </location>
    <ligand>
        <name>Ca(2+)</name>
        <dbReference type="ChEBI" id="CHEBI:29108"/>
        <label>3</label>
        <note>type II</note>
    </ligand>
</feature>
<feature type="binding site" evidence="2">
    <location>
        <position position="284"/>
    </location>
    <ligand>
        <name>Ca(2+)</name>
        <dbReference type="ChEBI" id="CHEBI:29108"/>
        <label>3</label>
        <note>type II</note>
    </ligand>
</feature>
<feature type="binding site" evidence="2">
    <location>
        <position position="327"/>
    </location>
    <ligand>
        <name>Ca(2+)</name>
        <dbReference type="ChEBI" id="CHEBI:29108"/>
        <label>4</label>
        <note>type II</note>
    </ligand>
</feature>
<feature type="binding site" evidence="2">
    <location>
        <position position="328"/>
    </location>
    <ligand>
        <name>Ca(2+)</name>
        <dbReference type="ChEBI" id="CHEBI:29108"/>
        <label>4</label>
        <note>type II</note>
    </ligand>
</feature>
<feature type="binding site" evidence="2">
    <location>
        <position position="352"/>
    </location>
    <ligand>
        <name>Ca(2+)</name>
        <dbReference type="ChEBI" id="CHEBI:29108"/>
        <label>4</label>
        <note>type II</note>
    </ligand>
</feature>
<feature type="binding site" evidence="2">
    <location>
        <position position="469"/>
    </location>
    <ligand>
        <name>Ca(2+)</name>
        <dbReference type="ChEBI" id="CHEBI:29108"/>
        <label>5</label>
        <note>type II</note>
    </ligand>
</feature>
<feature type="binding site" evidence="2">
    <location>
        <position position="470"/>
    </location>
    <ligand>
        <name>Ca(2+)</name>
        <dbReference type="ChEBI" id="CHEBI:29108"/>
        <label>5</label>
        <note>type II</note>
    </ligand>
</feature>
<feature type="binding site" evidence="2">
    <location>
        <position position="500"/>
    </location>
    <ligand>
        <name>Ca(2+)</name>
        <dbReference type="ChEBI" id="CHEBI:29108"/>
        <label>5</label>
        <note>type II</note>
    </ligand>
</feature>
<feature type="binding site" evidence="2">
    <location>
        <position position="512"/>
    </location>
    <ligand>
        <name>Ca(2+)</name>
        <dbReference type="ChEBI" id="CHEBI:29108"/>
        <label>6</label>
        <note>type I</note>
    </ligand>
</feature>
<feature type="binding site" evidence="2">
    <location>
        <position position="517"/>
    </location>
    <ligand>
        <name>Ca(2+)</name>
        <dbReference type="ChEBI" id="CHEBI:29108"/>
        <label>6</label>
        <note>type I</note>
    </ligand>
</feature>
<feature type="binding site" evidence="2">
    <location>
        <position position="519"/>
    </location>
    <ligand>
        <name>Ca(2+)</name>
        <dbReference type="ChEBI" id="CHEBI:29108"/>
        <label>6</label>
        <note>type I</note>
    </ligand>
</feature>
<feature type="binding site" evidence="2">
    <location>
        <position position="549"/>
    </location>
    <ligand>
        <name>Ca(2+)</name>
        <dbReference type="ChEBI" id="CHEBI:29108"/>
        <label>5</label>
        <note>type II</note>
    </ligand>
</feature>
<feature type="binding site" evidence="5 15">
    <location>
        <position position="589"/>
    </location>
    <ligand>
        <name>Ca(2+)</name>
        <dbReference type="ChEBI" id="CHEBI:29108"/>
        <label>7</label>
        <note>type II</note>
    </ligand>
</feature>
<feature type="binding site" evidence="5 15">
    <location>
        <position position="590"/>
    </location>
    <ligand>
        <name>Ca(2+)</name>
        <dbReference type="ChEBI" id="CHEBI:29108"/>
        <label>7</label>
        <note>type II</note>
    </ligand>
</feature>
<feature type="binding site" evidence="5 15">
    <location>
        <position position="612"/>
    </location>
    <ligand>
        <name>Ca(2+)</name>
        <dbReference type="ChEBI" id="CHEBI:29108"/>
        <label>7</label>
        <note>type II</note>
    </ligand>
</feature>
<feature type="binding site" evidence="5 15">
    <location>
        <position position="694"/>
    </location>
    <ligand>
        <name>Ca(2+)</name>
        <dbReference type="ChEBI" id="CHEBI:29108"/>
        <label>8</label>
        <note>type II</note>
    </ligand>
</feature>
<feature type="binding site" evidence="5 15">
    <location>
        <position position="695"/>
    </location>
    <ligand>
        <name>Ca(2+)</name>
        <dbReference type="ChEBI" id="CHEBI:29108"/>
        <label>8</label>
        <note>type II</note>
    </ligand>
</feature>
<feature type="binding site" evidence="5 15">
    <location>
        <position position="717"/>
    </location>
    <ligand>
        <name>Ca(2+)</name>
        <dbReference type="ChEBI" id="CHEBI:29108"/>
        <label>8</label>
        <note>type II</note>
    </ligand>
</feature>
<feature type="modified residue" description="Phosphotyrosine" evidence="2">
    <location>
        <position position="84"/>
    </location>
</feature>
<feature type="modified residue" description="Phosphotyrosine" evidence="2">
    <location>
        <position position="407"/>
    </location>
</feature>
<feature type="modified residue" description="Phosphotyrosine" evidence="2">
    <location>
        <position position="463"/>
    </location>
</feature>
<feature type="modified residue" description="N6-acetyllysine" evidence="30">
    <location>
        <position position="582"/>
    </location>
</feature>
<feature type="modified residue" description="Phosphotyrosine" evidence="2">
    <location>
        <position position="601"/>
    </location>
</feature>
<feature type="modified residue" description="Phosphotyrosine" evidence="2">
    <location>
        <position position="649"/>
    </location>
</feature>
<feature type="modified residue" description="Phosphothreonine" evidence="2">
    <location>
        <position position="740"/>
    </location>
</feature>
<feature type="disulfide bond" description="In isoform 1" evidence="2">
    <location>
        <begin position="213"/>
        <end position="226"/>
    </location>
</feature>
<feature type="splice variant" id="VSP_018960" description="In isoform 2." evidence="12 13">
    <location>
        <begin position="1"/>
        <end position="49"/>
    </location>
</feature>
<feature type="sequence conflict" description="In Ref. 1; AAA37677." evidence="14" ref="1">
    <original>GG</original>
    <variation>ET</variation>
    <location>
        <begin position="262"/>
        <end position="263"/>
    </location>
</feature>
<feature type="sequence conflict" description="In Ref. 2; BAC41004." evidence="14" ref="2">
    <original>P</original>
    <variation>H</variation>
    <location>
        <position position="274"/>
    </location>
</feature>
<feature type="sequence conflict" description="In Ref. 1; AAA37677." evidence="14" ref="1">
    <original>R</original>
    <variation>K</variation>
    <location>
        <position position="294"/>
    </location>
</feature>
<feature type="sequence conflict" description="In Ref. 2; BAC41004." evidence="14" ref="2">
    <original>E</original>
    <variation>K</variation>
    <location>
        <position position="316"/>
    </location>
</feature>
<feature type="sequence conflict" description="In Ref. 1; AAA37677." evidence="14" ref="1">
    <original>A</original>
    <variation>P</variation>
    <location>
        <position position="323"/>
    </location>
</feature>
<feature type="sequence conflict" description="In Ref. 1; AAA37677." evidence="14" ref="1">
    <original>A</original>
    <variation>G</variation>
    <location>
        <position position="423"/>
    </location>
</feature>
<feature type="sequence conflict" description="In Ref. 1; AAA37677." evidence="14" ref="1">
    <original>G</original>
    <variation>A</variation>
    <location>
        <position position="615"/>
    </location>
</feature>
<feature type="sequence conflict" description="In Ref. 1; AAA37677." evidence="14" ref="1">
    <original>A</original>
    <variation>G</variation>
    <location>
        <position position="638"/>
    </location>
</feature>
<feature type="sequence conflict" description="In Ref. 1; AAA37677." evidence="14" ref="1">
    <original>A</original>
    <variation>S</variation>
    <location>
        <position position="648"/>
    </location>
</feature>
<feature type="sequence conflict" description="In Ref. 1; AAA37677." evidence="14" ref="1">
    <original>D</original>
    <variation>N</variation>
    <location>
        <position position="763"/>
    </location>
</feature>
<feature type="helix" evidence="32">
    <location>
        <begin position="55"/>
        <end position="59"/>
    </location>
</feature>
<feature type="strand" evidence="32">
    <location>
        <begin position="62"/>
        <end position="72"/>
    </location>
</feature>
<feature type="strand" evidence="32">
    <location>
        <begin position="75"/>
        <end position="78"/>
    </location>
</feature>
<feature type="helix" evidence="32">
    <location>
        <begin position="81"/>
        <end position="83"/>
    </location>
</feature>
<feature type="strand" evidence="32">
    <location>
        <begin position="86"/>
        <end position="88"/>
    </location>
</feature>
<feature type="strand" evidence="32">
    <location>
        <begin position="92"/>
        <end position="100"/>
    </location>
</feature>
<feature type="strand" evidence="32">
    <location>
        <begin position="106"/>
        <end position="114"/>
    </location>
</feature>
<feature type="helix" evidence="32">
    <location>
        <begin position="120"/>
        <end position="136"/>
    </location>
</feature>
<feature type="turn" evidence="32">
    <location>
        <begin position="137"/>
        <end position="139"/>
    </location>
</feature>
<feature type="strand" evidence="32">
    <location>
        <begin position="141"/>
        <end position="147"/>
    </location>
</feature>
<feature type="helix" evidence="32">
    <location>
        <begin position="153"/>
        <end position="156"/>
    </location>
</feature>
<feature type="strand" evidence="32">
    <location>
        <begin position="164"/>
        <end position="167"/>
    </location>
</feature>
<feature type="strand" evidence="31">
    <location>
        <begin position="445"/>
        <end position="451"/>
    </location>
</feature>
<feature type="strand" evidence="31">
    <location>
        <begin position="454"/>
        <end position="457"/>
    </location>
</feature>
<feature type="helix" evidence="31">
    <location>
        <begin position="460"/>
        <end position="462"/>
    </location>
</feature>
<feature type="strand" evidence="31">
    <location>
        <begin position="465"/>
        <end position="467"/>
    </location>
</feature>
<feature type="strand" evidence="31">
    <location>
        <begin position="470"/>
        <end position="477"/>
    </location>
</feature>
<feature type="strand" evidence="31">
    <location>
        <begin position="486"/>
        <end position="492"/>
    </location>
</feature>
<feature type="helix" evidence="31">
    <location>
        <begin position="498"/>
        <end position="514"/>
    </location>
</feature>
<feature type="turn" evidence="31">
    <location>
        <begin position="515"/>
        <end position="517"/>
    </location>
</feature>
<feature type="strand" evidence="31">
    <location>
        <begin position="519"/>
        <end position="525"/>
    </location>
</feature>
<feature type="helix" evidence="31">
    <location>
        <begin position="531"/>
        <end position="535"/>
    </location>
</feature>
<feature type="turn" evidence="31">
    <location>
        <begin position="536"/>
        <end position="539"/>
    </location>
</feature>
<feature type="strand" evidence="31">
    <location>
        <begin position="542"/>
        <end position="546"/>
    </location>
</feature>
<feature type="strand" evidence="31">
    <location>
        <begin position="551"/>
        <end position="553"/>
    </location>
</feature>
<feature type="strand" evidence="31">
    <location>
        <begin position="560"/>
        <end position="568"/>
    </location>
</feature>
<feature type="strand" evidence="31">
    <location>
        <begin position="570"/>
        <end position="572"/>
    </location>
</feature>
<feature type="strand" evidence="31">
    <location>
        <begin position="574"/>
        <end position="579"/>
    </location>
</feature>
<feature type="helix" evidence="31">
    <location>
        <begin position="583"/>
        <end position="585"/>
    </location>
</feature>
<feature type="strand" evidence="31">
    <location>
        <begin position="590"/>
        <end position="595"/>
    </location>
</feature>
<feature type="strand" evidence="31">
    <location>
        <begin position="600"/>
        <end position="604"/>
    </location>
</feature>
<feature type="helix" evidence="31">
    <location>
        <begin position="610"/>
        <end position="623"/>
    </location>
</feature>
<feature type="strand" evidence="31">
    <location>
        <begin position="627"/>
        <end position="631"/>
    </location>
</feature>
<feature type="helix" evidence="31">
    <location>
        <begin position="637"/>
        <end position="643"/>
    </location>
</feature>
<feature type="helix" evidence="31">
    <location>
        <begin position="653"/>
        <end position="656"/>
    </location>
</feature>
<feature type="helix" evidence="31">
    <location>
        <begin position="660"/>
        <end position="662"/>
    </location>
</feature>
<feature type="strand" evidence="31">
    <location>
        <begin position="666"/>
        <end position="671"/>
    </location>
</feature>
<feature type="strand" evidence="31">
    <location>
        <begin position="674"/>
        <end position="676"/>
    </location>
</feature>
<feature type="strand" evidence="31">
    <location>
        <begin position="678"/>
        <end position="681"/>
    </location>
</feature>
<feature type="helix" evidence="31">
    <location>
        <begin position="688"/>
        <end position="690"/>
    </location>
</feature>
<feature type="strand" evidence="31">
    <location>
        <begin position="695"/>
        <end position="700"/>
    </location>
</feature>
<feature type="strand" evidence="31">
    <location>
        <begin position="705"/>
        <end position="709"/>
    </location>
</feature>
<feature type="helix" evidence="31">
    <location>
        <begin position="715"/>
        <end position="729"/>
    </location>
</feature>
<feature type="turn" evidence="31">
    <location>
        <begin position="733"/>
        <end position="735"/>
    </location>
</feature>
<feature type="strand" evidence="31">
    <location>
        <begin position="742"/>
        <end position="746"/>
    </location>
</feature>
<feature type="helix" evidence="31">
    <location>
        <begin position="752"/>
        <end position="755"/>
    </location>
</feature>
<feature type="initiator methionine" description="Removed; alternate" evidence="11">
    <location sequence="P13020-2">
        <position position="1"/>
    </location>
</feature>
<feature type="modified residue" description="N-acetylmethionine; alternate" evidence="11">
    <location sequence="P13020-2">
        <position position="1"/>
    </location>
</feature>
<gene>
    <name type="primary">Gsn</name>
    <name type="synonym">Gsb</name>
</gene>
<protein>
    <recommendedName>
        <fullName>Gelsolin</fullName>
    </recommendedName>
    <alternativeName>
        <fullName>Actin-depolymerizing factor</fullName>
        <shortName>ADF</shortName>
    </alternativeName>
    <alternativeName>
        <fullName>Brevin</fullName>
    </alternativeName>
</protein>
<proteinExistence type="evidence at protein level"/>
<comment type="function">
    <text evidence="2">Calcium-regulated, actin-modulating protein that binds to the plus (or barbed) ends of actin monomers or filaments, preventing monomer exchange (end-blocking or capping). It can promote the assembly of monomers into filaments (nucleation) as well as sever filaments already formed (By similarity). Plays a role in ciliogenesis (By similarity).</text>
</comment>
<comment type="subunit">
    <text evidence="1 6 10">Binds to actin and to fibronectin. Identified in a complex composed of ACTA1, COBL, GSN and TMSB4X (By similarity). Interacts with the inactive form of EIF2AK2/PKR. Interacts with FLII (PubMed:37126682).</text>
</comment>
<comment type="subcellular location">
    <molecule>Isoform 2</molecule>
    <subcellularLocation>
        <location>Cytoplasm</location>
        <location>Cytoskeleton</location>
    </subcellularLocation>
</comment>
<comment type="subcellular location">
    <molecule>Isoform 1</molecule>
    <subcellularLocation>
        <location>Secreted</location>
    </subcellularLocation>
</comment>
<comment type="alternative products">
    <event type="alternative initiation"/>
    <isoform>
        <id>P13020-1</id>
        <name>1</name>
        <name>Secreted</name>
        <name>Plasma</name>
        <sequence type="displayed"/>
    </isoform>
    <isoform>
        <id>P13020-2</id>
        <name>2</name>
        <name>Cytoplasmic</name>
        <sequence type="described" ref="VSP_018960"/>
    </isoform>
</comment>
<comment type="domain">
    <text evidence="2 5 7 8 9">Comprises six structurally related gelsolin-like (G1-G6) domains, that, in a calcium-free environment, are packed together to form a compact globular structure in which the putative actin-binding sequences are not sufficiently exposed to enable binding to occur (By similarity). Binding calcium may release the connections that join the N- and C-terminal halves of gelsolin, enabling each half to bind actin relatively independently (By similarity). G1 and G4 bind two Ca(2+) in a type I and in a type II manner (PubMed:24743229, PubMed:28695858, PubMed:31199804). G2, G3, G5 and G6 bind only one Ca(2+) in a type II manner (PubMed:12742020, PubMed:24743229, PubMed:28695858, PubMed:31199804). Type I Ca(2+) binding sites are shared between actin and gelsolin-like repeats G1 and G4 (PubMed:24743229, PubMed:31199804). Type I binding governs the strength of interactions between gelsolin and actin by direct participation at the binding interface (By similarity). Ca(2+) binding to G2 and G6 disrupts the interactions between G2 and G6, releases the C-terminal tail, and induces large interdomain rearrangements that result in the exposure of the F-actin-binding site on G2 and contributes to the activation of gelsolin (By similarity). Binding to phosphoinositides may inhibit the severing and capping properties of gelsolin (By similarity).</text>
</comment>
<comment type="PTM">
    <text evidence="1">Phosphorylated on tyrosine residues in vitro.</text>
</comment>
<comment type="similarity">
    <text evidence="14">Belongs to the villin/gelsolin family.</text>
</comment>